<organism>
    <name type="scientific">Streptococcus thermophilus (strain CNRZ 1066)</name>
    <dbReference type="NCBI Taxonomy" id="299768"/>
    <lineage>
        <taxon>Bacteria</taxon>
        <taxon>Bacillati</taxon>
        <taxon>Bacillota</taxon>
        <taxon>Bacilli</taxon>
        <taxon>Lactobacillales</taxon>
        <taxon>Streptococcaceae</taxon>
        <taxon>Streptococcus</taxon>
    </lineage>
</organism>
<name>SYFA_STRT1</name>
<reference key="1">
    <citation type="journal article" date="2004" name="Nat. Biotechnol.">
        <title>Complete sequence and comparative genome analysis of the dairy bacterium Streptococcus thermophilus.</title>
        <authorList>
            <person name="Bolotin A."/>
            <person name="Quinquis B."/>
            <person name="Renault P."/>
            <person name="Sorokin A."/>
            <person name="Ehrlich S.D."/>
            <person name="Kulakauskas S."/>
            <person name="Lapidus A."/>
            <person name="Goltsman E."/>
            <person name="Mazur M."/>
            <person name="Pusch G.D."/>
            <person name="Fonstein M."/>
            <person name="Overbeek R."/>
            <person name="Kyprides N."/>
            <person name="Purnelle B."/>
            <person name="Prozzi D."/>
            <person name="Ngui K."/>
            <person name="Masuy D."/>
            <person name="Hancy F."/>
            <person name="Burteau S."/>
            <person name="Boutry M."/>
            <person name="Delcour J."/>
            <person name="Goffeau A."/>
            <person name="Hols P."/>
        </authorList>
    </citation>
    <scope>NUCLEOTIDE SEQUENCE [LARGE SCALE GENOMIC DNA]</scope>
    <source>
        <strain>CNRZ 1066</strain>
    </source>
</reference>
<comment type="catalytic activity">
    <reaction evidence="1">
        <text>tRNA(Phe) + L-phenylalanine + ATP = L-phenylalanyl-tRNA(Phe) + AMP + diphosphate + H(+)</text>
        <dbReference type="Rhea" id="RHEA:19413"/>
        <dbReference type="Rhea" id="RHEA-COMP:9668"/>
        <dbReference type="Rhea" id="RHEA-COMP:9699"/>
        <dbReference type="ChEBI" id="CHEBI:15378"/>
        <dbReference type="ChEBI" id="CHEBI:30616"/>
        <dbReference type="ChEBI" id="CHEBI:33019"/>
        <dbReference type="ChEBI" id="CHEBI:58095"/>
        <dbReference type="ChEBI" id="CHEBI:78442"/>
        <dbReference type="ChEBI" id="CHEBI:78531"/>
        <dbReference type="ChEBI" id="CHEBI:456215"/>
        <dbReference type="EC" id="6.1.1.20"/>
    </reaction>
</comment>
<comment type="cofactor">
    <cofactor evidence="1">
        <name>Mg(2+)</name>
        <dbReference type="ChEBI" id="CHEBI:18420"/>
    </cofactor>
    <text evidence="1">Binds 2 magnesium ions per tetramer.</text>
</comment>
<comment type="subunit">
    <text evidence="1">Tetramer of two alpha and two beta subunits.</text>
</comment>
<comment type="subcellular location">
    <subcellularLocation>
        <location evidence="1">Cytoplasm</location>
    </subcellularLocation>
</comment>
<comment type="similarity">
    <text evidence="1">Belongs to the class-II aminoacyl-tRNA synthetase family. Phe-tRNA synthetase alpha subunit type 1 subfamily.</text>
</comment>
<comment type="sequence caution" evidence="2">
    <conflict type="erroneous initiation">
        <sequence resource="EMBL-CDS" id="AAV62837"/>
    </conflict>
</comment>
<evidence type="ECO:0000255" key="1">
    <source>
        <dbReference type="HAMAP-Rule" id="MF_00281"/>
    </source>
</evidence>
<evidence type="ECO:0000305" key="2"/>
<feature type="chain" id="PRO_0000232032" description="Phenylalanine--tRNA ligase alpha subunit">
    <location>
        <begin position="1"/>
        <end position="347"/>
    </location>
</feature>
<feature type="binding site" evidence="1">
    <location>
        <position position="261"/>
    </location>
    <ligand>
        <name>Mg(2+)</name>
        <dbReference type="ChEBI" id="CHEBI:18420"/>
        <note>shared with beta subunit</note>
    </ligand>
</feature>
<dbReference type="EC" id="6.1.1.20" evidence="1"/>
<dbReference type="EMBL" id="CP000024">
    <property type="protein sequence ID" value="AAV62837.1"/>
    <property type="status" value="ALT_INIT"/>
    <property type="molecule type" value="Genomic_DNA"/>
</dbReference>
<dbReference type="RefSeq" id="WP_002947433.1">
    <property type="nucleotide sequence ID" value="NC_006449.1"/>
</dbReference>
<dbReference type="SMR" id="Q5LZ70"/>
<dbReference type="GeneID" id="66899080"/>
<dbReference type="KEGG" id="stc:str1294"/>
<dbReference type="HOGENOM" id="CLU_025086_0_1_9"/>
<dbReference type="GO" id="GO:0005737">
    <property type="term" value="C:cytoplasm"/>
    <property type="evidence" value="ECO:0007669"/>
    <property type="project" value="UniProtKB-SubCell"/>
</dbReference>
<dbReference type="GO" id="GO:0005524">
    <property type="term" value="F:ATP binding"/>
    <property type="evidence" value="ECO:0007669"/>
    <property type="project" value="UniProtKB-UniRule"/>
</dbReference>
<dbReference type="GO" id="GO:0140096">
    <property type="term" value="F:catalytic activity, acting on a protein"/>
    <property type="evidence" value="ECO:0007669"/>
    <property type="project" value="UniProtKB-ARBA"/>
</dbReference>
<dbReference type="GO" id="GO:0000287">
    <property type="term" value="F:magnesium ion binding"/>
    <property type="evidence" value="ECO:0007669"/>
    <property type="project" value="UniProtKB-UniRule"/>
</dbReference>
<dbReference type="GO" id="GO:0004826">
    <property type="term" value="F:phenylalanine-tRNA ligase activity"/>
    <property type="evidence" value="ECO:0007669"/>
    <property type="project" value="UniProtKB-UniRule"/>
</dbReference>
<dbReference type="GO" id="GO:0016740">
    <property type="term" value="F:transferase activity"/>
    <property type="evidence" value="ECO:0007669"/>
    <property type="project" value="UniProtKB-ARBA"/>
</dbReference>
<dbReference type="GO" id="GO:0000049">
    <property type="term" value="F:tRNA binding"/>
    <property type="evidence" value="ECO:0007669"/>
    <property type="project" value="InterPro"/>
</dbReference>
<dbReference type="GO" id="GO:0006432">
    <property type="term" value="P:phenylalanyl-tRNA aminoacylation"/>
    <property type="evidence" value="ECO:0007669"/>
    <property type="project" value="UniProtKB-UniRule"/>
</dbReference>
<dbReference type="CDD" id="cd00496">
    <property type="entry name" value="PheRS_alpha_core"/>
    <property type="match status" value="1"/>
</dbReference>
<dbReference type="FunFam" id="3.30.930.10:FF:000003">
    <property type="entry name" value="Phenylalanine--tRNA ligase alpha subunit"/>
    <property type="match status" value="1"/>
</dbReference>
<dbReference type="Gene3D" id="3.30.930.10">
    <property type="entry name" value="Bira Bifunctional Protein, Domain 2"/>
    <property type="match status" value="1"/>
</dbReference>
<dbReference type="HAMAP" id="MF_00281">
    <property type="entry name" value="Phe_tRNA_synth_alpha1"/>
    <property type="match status" value="1"/>
</dbReference>
<dbReference type="InterPro" id="IPR006195">
    <property type="entry name" value="aa-tRNA-synth_II"/>
</dbReference>
<dbReference type="InterPro" id="IPR045864">
    <property type="entry name" value="aa-tRNA-synth_II/BPL/LPL"/>
</dbReference>
<dbReference type="InterPro" id="IPR004529">
    <property type="entry name" value="Phe-tRNA-synth_IIc_asu"/>
</dbReference>
<dbReference type="InterPro" id="IPR004188">
    <property type="entry name" value="Phe-tRNA_ligase_II_N"/>
</dbReference>
<dbReference type="InterPro" id="IPR022911">
    <property type="entry name" value="Phe_tRNA_ligase_alpha1_bac"/>
</dbReference>
<dbReference type="InterPro" id="IPR002319">
    <property type="entry name" value="Phenylalanyl-tRNA_Synthase"/>
</dbReference>
<dbReference type="InterPro" id="IPR010978">
    <property type="entry name" value="tRNA-bd_arm"/>
</dbReference>
<dbReference type="NCBIfam" id="TIGR00468">
    <property type="entry name" value="pheS"/>
    <property type="match status" value="1"/>
</dbReference>
<dbReference type="PANTHER" id="PTHR11538:SF41">
    <property type="entry name" value="PHENYLALANINE--TRNA LIGASE, MITOCHONDRIAL"/>
    <property type="match status" value="1"/>
</dbReference>
<dbReference type="PANTHER" id="PTHR11538">
    <property type="entry name" value="PHENYLALANYL-TRNA SYNTHETASE"/>
    <property type="match status" value="1"/>
</dbReference>
<dbReference type="Pfam" id="PF02912">
    <property type="entry name" value="Phe_tRNA-synt_N"/>
    <property type="match status" value="1"/>
</dbReference>
<dbReference type="Pfam" id="PF01409">
    <property type="entry name" value="tRNA-synt_2d"/>
    <property type="match status" value="1"/>
</dbReference>
<dbReference type="SUPFAM" id="SSF55681">
    <property type="entry name" value="Class II aaRS and biotin synthetases"/>
    <property type="match status" value="1"/>
</dbReference>
<dbReference type="SUPFAM" id="SSF46589">
    <property type="entry name" value="tRNA-binding arm"/>
    <property type="match status" value="1"/>
</dbReference>
<dbReference type="PROSITE" id="PS50862">
    <property type="entry name" value="AA_TRNA_LIGASE_II"/>
    <property type="match status" value="1"/>
</dbReference>
<accession>Q5LZ70</accession>
<sequence length="347" mass="39171">MDLQTQLQELKTSTQAKLAEMRGEHSKELQELRVAVLGKKGSLTELLKGLKDLPSEERPTVGKMVNEVRDVLTEAFDEAAKVVEAAKIQAQLDSESLDVTLPGRQVNLGNRHILSQIAEEIEDIFLGMGFQIVDGFEVETDYYNFERMNLPKDHPARDMQDTFYITEEILLRTHTSPVQARTLDKHDFSKGPLKMISPGRVFRRDTDDATHSHQFHQIEGLVVGKNISMGDLKGTLEMIIQKMFGAERQIRLRPSYFPFTEPSVEVDVSCFKCGGKGCNVCKKTGWIEILGAGMVHPQVLEMSGVDSEEYSGFAFGLGQERIAMLRYGINDIRSFYQGDVRFSEQFK</sequence>
<protein>
    <recommendedName>
        <fullName evidence="1">Phenylalanine--tRNA ligase alpha subunit</fullName>
        <ecNumber evidence="1">6.1.1.20</ecNumber>
    </recommendedName>
    <alternativeName>
        <fullName evidence="1">Phenylalanyl-tRNA synthetase alpha subunit</fullName>
        <shortName evidence="1">PheRS</shortName>
    </alternativeName>
</protein>
<proteinExistence type="inferred from homology"/>
<gene>
    <name evidence="1" type="primary">pheS</name>
    <name type="ordered locus">str1294</name>
</gene>
<keyword id="KW-0030">Aminoacyl-tRNA synthetase</keyword>
<keyword id="KW-0067">ATP-binding</keyword>
<keyword id="KW-0963">Cytoplasm</keyword>
<keyword id="KW-0436">Ligase</keyword>
<keyword id="KW-0460">Magnesium</keyword>
<keyword id="KW-0479">Metal-binding</keyword>
<keyword id="KW-0547">Nucleotide-binding</keyword>
<keyword id="KW-0648">Protein biosynthesis</keyword>